<reference key="1">
    <citation type="journal article" date="2004" name="Nature">
        <title>Genome evolution in yeasts.</title>
        <authorList>
            <person name="Dujon B."/>
            <person name="Sherman D."/>
            <person name="Fischer G."/>
            <person name="Durrens P."/>
            <person name="Casaregola S."/>
            <person name="Lafontaine I."/>
            <person name="de Montigny J."/>
            <person name="Marck C."/>
            <person name="Neuveglise C."/>
            <person name="Talla E."/>
            <person name="Goffard N."/>
            <person name="Frangeul L."/>
            <person name="Aigle M."/>
            <person name="Anthouard V."/>
            <person name="Babour A."/>
            <person name="Barbe V."/>
            <person name="Barnay S."/>
            <person name="Blanchin S."/>
            <person name="Beckerich J.-M."/>
            <person name="Beyne E."/>
            <person name="Bleykasten C."/>
            <person name="Boisrame A."/>
            <person name="Boyer J."/>
            <person name="Cattolico L."/>
            <person name="Confanioleri F."/>
            <person name="de Daruvar A."/>
            <person name="Despons L."/>
            <person name="Fabre E."/>
            <person name="Fairhead C."/>
            <person name="Ferry-Dumazet H."/>
            <person name="Groppi A."/>
            <person name="Hantraye F."/>
            <person name="Hennequin C."/>
            <person name="Jauniaux N."/>
            <person name="Joyet P."/>
            <person name="Kachouri R."/>
            <person name="Kerrest A."/>
            <person name="Koszul R."/>
            <person name="Lemaire M."/>
            <person name="Lesur I."/>
            <person name="Ma L."/>
            <person name="Muller H."/>
            <person name="Nicaud J.-M."/>
            <person name="Nikolski M."/>
            <person name="Oztas S."/>
            <person name="Ozier-Kalogeropoulos O."/>
            <person name="Pellenz S."/>
            <person name="Potier S."/>
            <person name="Richard G.-F."/>
            <person name="Straub M.-L."/>
            <person name="Suleau A."/>
            <person name="Swennen D."/>
            <person name="Tekaia F."/>
            <person name="Wesolowski-Louvel M."/>
            <person name="Westhof E."/>
            <person name="Wirth B."/>
            <person name="Zeniou-Meyer M."/>
            <person name="Zivanovic Y."/>
            <person name="Bolotin-Fukuhara M."/>
            <person name="Thierry A."/>
            <person name="Bouchier C."/>
            <person name="Caudron B."/>
            <person name="Scarpelli C."/>
            <person name="Gaillardin C."/>
            <person name="Weissenbach J."/>
            <person name="Wincker P."/>
            <person name="Souciet J.-L."/>
        </authorList>
    </citation>
    <scope>NUCLEOTIDE SEQUENCE [LARGE SCALE GENOMIC DNA]</scope>
    <source>
        <strain>ATCC 8585 / CBS 2359 / DSM 70799 / NBRC 1267 / NRRL Y-1140 / WM37</strain>
    </source>
</reference>
<feature type="chain" id="PRO_0000303203" description="Mediator of RNA polymerase II transcription subunit 7">
    <location>
        <begin position="1"/>
        <end position="213"/>
    </location>
</feature>
<feature type="region of interest" description="Disordered" evidence="2">
    <location>
        <begin position="96"/>
        <end position="120"/>
    </location>
</feature>
<feature type="compositionally biased region" description="Polar residues" evidence="2">
    <location>
        <begin position="97"/>
        <end position="120"/>
    </location>
</feature>
<proteinExistence type="inferred from homology"/>
<keyword id="KW-0010">Activator</keyword>
<keyword id="KW-0539">Nucleus</keyword>
<keyword id="KW-1185">Reference proteome</keyword>
<keyword id="KW-0804">Transcription</keyword>
<keyword id="KW-0805">Transcription regulation</keyword>
<gene>
    <name type="primary">MED7</name>
    <name type="ordered locus">KLLA0E07117g</name>
</gene>
<protein>
    <recommendedName>
        <fullName>Mediator of RNA polymerase II transcription subunit 7</fullName>
    </recommendedName>
    <alternativeName>
        <fullName>Mediator complex subunit 7</fullName>
    </alternativeName>
</protein>
<accession>Q6CP69</accession>
<organism>
    <name type="scientific">Kluyveromyces lactis (strain ATCC 8585 / CBS 2359 / DSM 70799 / NBRC 1267 / NRRL Y-1140 / WM37)</name>
    <name type="common">Yeast</name>
    <name type="synonym">Candida sphaerica</name>
    <dbReference type="NCBI Taxonomy" id="284590"/>
    <lineage>
        <taxon>Eukaryota</taxon>
        <taxon>Fungi</taxon>
        <taxon>Dikarya</taxon>
        <taxon>Ascomycota</taxon>
        <taxon>Saccharomycotina</taxon>
        <taxon>Saccharomycetes</taxon>
        <taxon>Saccharomycetales</taxon>
        <taxon>Saccharomycetaceae</taxon>
        <taxon>Kluyveromyces</taxon>
    </lineage>
</organism>
<sequence>MSDKNEVSSLYPPPPPFIQFFTEENSKLFRECGKDEEKLAKCTTKQREQLKYFVKPELPRDGSYRAFGNVWKIKDELPELSQMGIEQLYRKRESVTELENGTTTEVEPSPQDSQSGTNYENKIQESKKLMKSLLLNFLELIGILGVDSSRYEKKLDEIRVIAINIHHLLNEYRPHQSRESLIMLFEEQLEHKRKEMEHINKVCDEVESKLAQL</sequence>
<comment type="function">
    <text evidence="1">Component of the Mediator complex, a coactivator involved in the regulated transcription of nearly all RNA polymerase II-dependent genes. Mediator functions as a bridge to convey information from gene-specific regulatory proteins to the basal RNA polymerase II transcription machinery. Mediator is recruited to promoters by direct interactions with regulatory proteins and serves as a scaffold for the assembly of a functional preinitiation complex with RNA polymerase II and the general transcription factors (By similarity).</text>
</comment>
<comment type="subunit">
    <text evidence="1">Component of the Mediator complex.</text>
</comment>
<comment type="subcellular location">
    <subcellularLocation>
        <location evidence="1">Nucleus</location>
    </subcellularLocation>
</comment>
<comment type="similarity">
    <text evidence="3">Belongs to the Mediator complex subunit 7 family.</text>
</comment>
<name>MED7_KLULA</name>
<evidence type="ECO:0000250" key="1"/>
<evidence type="ECO:0000256" key="2">
    <source>
        <dbReference type="SAM" id="MobiDB-lite"/>
    </source>
</evidence>
<evidence type="ECO:0000305" key="3"/>
<dbReference type="EMBL" id="CR382125">
    <property type="protein sequence ID" value="CAG99357.1"/>
    <property type="molecule type" value="Genomic_DNA"/>
</dbReference>
<dbReference type="RefSeq" id="XP_454270.1">
    <property type="nucleotide sequence ID" value="XM_454270.1"/>
</dbReference>
<dbReference type="SMR" id="Q6CP69"/>
<dbReference type="FunCoup" id="Q6CP69">
    <property type="interactions" value="814"/>
</dbReference>
<dbReference type="STRING" id="284590.Q6CP69"/>
<dbReference type="PaxDb" id="284590-Q6CP69"/>
<dbReference type="KEGG" id="kla:KLLA0_E07129g"/>
<dbReference type="eggNOG" id="KOG0570">
    <property type="taxonomic scope" value="Eukaryota"/>
</dbReference>
<dbReference type="HOGENOM" id="CLU_065214_0_1_1"/>
<dbReference type="InParanoid" id="Q6CP69"/>
<dbReference type="OMA" id="IHDSYSM"/>
<dbReference type="Proteomes" id="UP000000598">
    <property type="component" value="Chromosome E"/>
</dbReference>
<dbReference type="GO" id="GO:0070847">
    <property type="term" value="C:core mediator complex"/>
    <property type="evidence" value="ECO:0007669"/>
    <property type="project" value="TreeGrafter"/>
</dbReference>
<dbReference type="GO" id="GO:0016592">
    <property type="term" value="C:mediator complex"/>
    <property type="evidence" value="ECO:0007669"/>
    <property type="project" value="InterPro"/>
</dbReference>
<dbReference type="GO" id="GO:0003712">
    <property type="term" value="F:transcription coregulator activity"/>
    <property type="evidence" value="ECO:0007669"/>
    <property type="project" value="InterPro"/>
</dbReference>
<dbReference type="GO" id="GO:0006357">
    <property type="term" value="P:regulation of transcription by RNA polymerase II"/>
    <property type="evidence" value="ECO:0007669"/>
    <property type="project" value="InterPro"/>
</dbReference>
<dbReference type="Gene3D" id="6.10.140.1520">
    <property type="match status" value="1"/>
</dbReference>
<dbReference type="Gene3D" id="6.10.140.200">
    <property type="match status" value="1"/>
</dbReference>
<dbReference type="InterPro" id="IPR037212">
    <property type="entry name" value="Med7/Med21-like"/>
</dbReference>
<dbReference type="InterPro" id="IPR009244">
    <property type="entry name" value="Mediatior_Med7"/>
</dbReference>
<dbReference type="InterPro" id="IPR044888">
    <property type="entry name" value="Mediatior_Med7_sf"/>
</dbReference>
<dbReference type="PANTHER" id="PTHR21428">
    <property type="entry name" value="MEDIATOR OF RNA POLYMERASE II TRANSCRIPTION SUBUNIT 7"/>
    <property type="match status" value="1"/>
</dbReference>
<dbReference type="PANTHER" id="PTHR21428:SF11">
    <property type="entry name" value="MEDIATOR OF RNA POLYMERASE II TRANSCRIPTION SUBUNIT 7"/>
    <property type="match status" value="1"/>
</dbReference>
<dbReference type="Pfam" id="PF05983">
    <property type="entry name" value="Med7"/>
    <property type="match status" value="1"/>
</dbReference>
<dbReference type="SUPFAM" id="SSF140718">
    <property type="entry name" value="Mediator hinge subcomplex-like"/>
    <property type="match status" value="1"/>
</dbReference>